<comment type="function">
    <text evidence="1">This is one of the proteins that bind and probably mediate the attachment of the 5S RNA into the large ribosomal subunit, where it forms part of the central protuberance.</text>
</comment>
<comment type="subunit">
    <text evidence="1">Part of the 50S ribosomal subunit; part of the 5S rRNA/L5/L18/L25 subcomplex. Contacts the 5S and 23S rRNAs.</text>
</comment>
<comment type="similarity">
    <text evidence="1">Belongs to the universal ribosomal protein uL18 family.</text>
</comment>
<sequence length="119" mass="13176">MSQIDKASRRQKIKDRSRVKVHGTMAKPRLCVYRSLSQIYAQLIDDDNGKTIMAVSSMSKENKALEGTKSEVCTVVGKQLAEMALAKGITTVVFDRNGFRYHGRLKALAEGAREAGLVF</sequence>
<feature type="chain" id="PRO_1000053010" description="Large ribosomal subunit protein uL18">
    <location>
        <begin position="1"/>
        <end position="119"/>
    </location>
</feature>
<feature type="region of interest" description="Disordered" evidence="2">
    <location>
        <begin position="1"/>
        <end position="20"/>
    </location>
</feature>
<feature type="compositionally biased region" description="Basic residues" evidence="2">
    <location>
        <begin position="9"/>
        <end position="20"/>
    </location>
</feature>
<gene>
    <name evidence="1" type="primary">rplR</name>
    <name type="ordered locus">Cpha266_2407</name>
</gene>
<evidence type="ECO:0000255" key="1">
    <source>
        <dbReference type="HAMAP-Rule" id="MF_01337"/>
    </source>
</evidence>
<evidence type="ECO:0000256" key="2">
    <source>
        <dbReference type="SAM" id="MobiDB-lite"/>
    </source>
</evidence>
<evidence type="ECO:0000305" key="3"/>
<dbReference type="EMBL" id="CP000492">
    <property type="protein sequence ID" value="ABL66395.1"/>
    <property type="molecule type" value="Genomic_DNA"/>
</dbReference>
<dbReference type="RefSeq" id="WP_011746177.1">
    <property type="nucleotide sequence ID" value="NC_008639.1"/>
</dbReference>
<dbReference type="SMR" id="A1BJ18"/>
<dbReference type="STRING" id="290317.Cpha266_2407"/>
<dbReference type="KEGG" id="cph:Cpha266_2407"/>
<dbReference type="eggNOG" id="COG0256">
    <property type="taxonomic scope" value="Bacteria"/>
</dbReference>
<dbReference type="HOGENOM" id="CLU_098841_0_1_10"/>
<dbReference type="OrthoDB" id="9810939at2"/>
<dbReference type="Proteomes" id="UP000008701">
    <property type="component" value="Chromosome"/>
</dbReference>
<dbReference type="GO" id="GO:0005737">
    <property type="term" value="C:cytoplasm"/>
    <property type="evidence" value="ECO:0007669"/>
    <property type="project" value="UniProtKB-ARBA"/>
</dbReference>
<dbReference type="GO" id="GO:1990904">
    <property type="term" value="C:ribonucleoprotein complex"/>
    <property type="evidence" value="ECO:0007669"/>
    <property type="project" value="UniProtKB-KW"/>
</dbReference>
<dbReference type="GO" id="GO:0005840">
    <property type="term" value="C:ribosome"/>
    <property type="evidence" value="ECO:0007669"/>
    <property type="project" value="UniProtKB-KW"/>
</dbReference>
<dbReference type="GO" id="GO:0008097">
    <property type="term" value="F:5S rRNA binding"/>
    <property type="evidence" value="ECO:0007669"/>
    <property type="project" value="TreeGrafter"/>
</dbReference>
<dbReference type="GO" id="GO:0003735">
    <property type="term" value="F:structural constituent of ribosome"/>
    <property type="evidence" value="ECO:0007669"/>
    <property type="project" value="InterPro"/>
</dbReference>
<dbReference type="GO" id="GO:0006412">
    <property type="term" value="P:translation"/>
    <property type="evidence" value="ECO:0007669"/>
    <property type="project" value="UniProtKB-UniRule"/>
</dbReference>
<dbReference type="CDD" id="cd00432">
    <property type="entry name" value="Ribosomal_L18_L5e"/>
    <property type="match status" value="1"/>
</dbReference>
<dbReference type="FunFam" id="3.30.420.100:FF:000001">
    <property type="entry name" value="50S ribosomal protein L18"/>
    <property type="match status" value="1"/>
</dbReference>
<dbReference type="Gene3D" id="3.30.420.100">
    <property type="match status" value="1"/>
</dbReference>
<dbReference type="HAMAP" id="MF_01337_B">
    <property type="entry name" value="Ribosomal_uL18_B"/>
    <property type="match status" value="1"/>
</dbReference>
<dbReference type="InterPro" id="IPR004389">
    <property type="entry name" value="Ribosomal_uL18_bac-type"/>
</dbReference>
<dbReference type="InterPro" id="IPR005484">
    <property type="entry name" value="Ribosomal_uL18_bac/euk"/>
</dbReference>
<dbReference type="NCBIfam" id="TIGR00060">
    <property type="entry name" value="L18_bact"/>
    <property type="match status" value="1"/>
</dbReference>
<dbReference type="PANTHER" id="PTHR12899">
    <property type="entry name" value="39S RIBOSOMAL PROTEIN L18, MITOCHONDRIAL"/>
    <property type="match status" value="1"/>
</dbReference>
<dbReference type="PANTHER" id="PTHR12899:SF3">
    <property type="entry name" value="LARGE RIBOSOMAL SUBUNIT PROTEIN UL18M"/>
    <property type="match status" value="1"/>
</dbReference>
<dbReference type="Pfam" id="PF00861">
    <property type="entry name" value="Ribosomal_L18p"/>
    <property type="match status" value="1"/>
</dbReference>
<dbReference type="SUPFAM" id="SSF53137">
    <property type="entry name" value="Translational machinery components"/>
    <property type="match status" value="1"/>
</dbReference>
<keyword id="KW-1185">Reference proteome</keyword>
<keyword id="KW-0687">Ribonucleoprotein</keyword>
<keyword id="KW-0689">Ribosomal protein</keyword>
<keyword id="KW-0694">RNA-binding</keyword>
<keyword id="KW-0699">rRNA-binding</keyword>
<protein>
    <recommendedName>
        <fullName evidence="1">Large ribosomal subunit protein uL18</fullName>
    </recommendedName>
    <alternativeName>
        <fullName evidence="3">50S ribosomal protein L18</fullName>
    </alternativeName>
</protein>
<name>RL18_CHLPD</name>
<accession>A1BJ18</accession>
<proteinExistence type="inferred from homology"/>
<reference key="1">
    <citation type="submission" date="2006-12" db="EMBL/GenBank/DDBJ databases">
        <title>Complete sequence of Chlorobium phaeobacteroides DSM 266.</title>
        <authorList>
            <consortium name="US DOE Joint Genome Institute"/>
            <person name="Copeland A."/>
            <person name="Lucas S."/>
            <person name="Lapidus A."/>
            <person name="Barry K."/>
            <person name="Detter J.C."/>
            <person name="Glavina del Rio T."/>
            <person name="Hammon N."/>
            <person name="Israni S."/>
            <person name="Pitluck S."/>
            <person name="Goltsman E."/>
            <person name="Schmutz J."/>
            <person name="Larimer F."/>
            <person name="Land M."/>
            <person name="Hauser L."/>
            <person name="Mikhailova N."/>
            <person name="Li T."/>
            <person name="Overmann J."/>
            <person name="Bryant D.A."/>
            <person name="Richardson P."/>
        </authorList>
    </citation>
    <scope>NUCLEOTIDE SEQUENCE [LARGE SCALE GENOMIC DNA]</scope>
    <source>
        <strain>DSM 266 / SMG 266 / 2430</strain>
    </source>
</reference>
<organism>
    <name type="scientific">Chlorobium phaeobacteroides (strain DSM 266 / SMG 266 / 2430)</name>
    <dbReference type="NCBI Taxonomy" id="290317"/>
    <lineage>
        <taxon>Bacteria</taxon>
        <taxon>Pseudomonadati</taxon>
        <taxon>Chlorobiota</taxon>
        <taxon>Chlorobiia</taxon>
        <taxon>Chlorobiales</taxon>
        <taxon>Chlorobiaceae</taxon>
        <taxon>Chlorobium/Pelodictyon group</taxon>
        <taxon>Chlorobium</taxon>
    </lineage>
</organism>